<organism>
    <name type="scientific">Pyrococcus horikoshii (strain ATCC 700860 / DSM 12428 / JCM 9974 / NBRC 100139 / OT-3)</name>
    <dbReference type="NCBI Taxonomy" id="70601"/>
    <lineage>
        <taxon>Archaea</taxon>
        <taxon>Methanobacteriati</taxon>
        <taxon>Methanobacteriota</taxon>
        <taxon>Thermococci</taxon>
        <taxon>Thermococcales</taxon>
        <taxon>Thermococcaceae</taxon>
        <taxon>Pyrococcus</taxon>
    </lineage>
</organism>
<keyword id="KW-0002">3D-structure</keyword>
<keyword id="KW-0028">Amino-acid biosynthesis</keyword>
<keyword id="KW-0100">Branched-chain amino acid biosynthesis</keyword>
<keyword id="KW-0432">Leucine biosynthesis</keyword>
<keyword id="KW-0456">Lyase</keyword>
<proteinExistence type="evidence at protein level"/>
<reference key="1">
    <citation type="journal article" date="1998" name="DNA Res.">
        <title>Complete sequence and gene organization of the genome of a hyper-thermophilic archaebacterium, Pyrococcus horikoshii OT3.</title>
        <authorList>
            <person name="Kawarabayasi Y."/>
            <person name="Sawada M."/>
            <person name="Horikawa H."/>
            <person name="Haikawa Y."/>
            <person name="Hino Y."/>
            <person name="Yamamoto S."/>
            <person name="Sekine M."/>
            <person name="Baba S."/>
            <person name="Kosugi H."/>
            <person name="Hosoyama A."/>
            <person name="Nagai Y."/>
            <person name="Sakai M."/>
            <person name="Ogura K."/>
            <person name="Otsuka R."/>
            <person name="Nakazawa H."/>
            <person name="Takamiya M."/>
            <person name="Ohfuku Y."/>
            <person name="Funahashi T."/>
            <person name="Tanaka T."/>
            <person name="Kudoh Y."/>
            <person name="Yamazaki J."/>
            <person name="Kushida N."/>
            <person name="Oguchi A."/>
            <person name="Aoki K."/>
            <person name="Yoshizawa T."/>
            <person name="Nakamura Y."/>
            <person name="Robb F.T."/>
            <person name="Horikoshi K."/>
            <person name="Masuchi Y."/>
            <person name="Shizuya H."/>
            <person name="Kikuchi H."/>
        </authorList>
    </citation>
    <scope>NUCLEOTIDE SEQUENCE [LARGE SCALE GENOMIC DNA]</scope>
    <source>
        <strain>ATCC 700860 / DSM 12428 / JCM 9974 / NBRC 100139 / OT-3</strain>
    </source>
</reference>
<name>LEUD_PYRHO</name>
<feature type="chain" id="PRO_0000141949" description="3-isopropylmalate dehydratase small subunit">
    <location>
        <begin position="1"/>
        <end position="163"/>
    </location>
</feature>
<feature type="strand" evidence="3">
    <location>
        <begin position="2"/>
        <end position="9"/>
    </location>
</feature>
<feature type="helix" evidence="3">
    <location>
        <begin position="16"/>
        <end position="19"/>
    </location>
</feature>
<feature type="helix" evidence="3">
    <location>
        <begin position="30"/>
        <end position="36"/>
    </location>
</feature>
<feature type="turn" evidence="3">
    <location>
        <begin position="37"/>
        <end position="41"/>
    </location>
</feature>
<feature type="helix" evidence="3">
    <location>
        <begin position="45"/>
        <end position="48"/>
    </location>
</feature>
<feature type="strand" evidence="3">
    <location>
        <begin position="54"/>
        <end position="56"/>
    </location>
</feature>
<feature type="strand" evidence="3">
    <location>
        <begin position="59"/>
        <end position="61"/>
    </location>
</feature>
<feature type="helix" evidence="3">
    <location>
        <begin position="69"/>
        <end position="77"/>
    </location>
</feature>
<feature type="strand" evidence="3">
    <location>
        <begin position="81"/>
        <end position="85"/>
    </location>
</feature>
<feature type="helix" evidence="3">
    <location>
        <begin position="89"/>
        <end position="98"/>
    </location>
</feature>
<feature type="strand" evidence="3">
    <location>
        <begin position="102"/>
        <end position="105"/>
    </location>
</feature>
<feature type="strand" evidence="3">
    <location>
        <begin position="115"/>
        <end position="119"/>
    </location>
</feature>
<feature type="turn" evidence="3">
    <location>
        <begin position="120"/>
        <end position="123"/>
    </location>
</feature>
<feature type="strand" evidence="3">
    <location>
        <begin position="124"/>
        <end position="127"/>
    </location>
</feature>
<feature type="strand" evidence="3">
    <location>
        <begin position="130"/>
        <end position="133"/>
    </location>
</feature>
<feature type="helix" evidence="3">
    <location>
        <begin position="139"/>
        <end position="146"/>
    </location>
</feature>
<feature type="helix" evidence="3">
    <location>
        <begin position="150"/>
        <end position="156"/>
    </location>
</feature>
<dbReference type="EC" id="4.2.1.33"/>
<dbReference type="EMBL" id="BA000001">
    <property type="protein sequence ID" value="BAA30838.1"/>
    <property type="molecule type" value="Genomic_DNA"/>
</dbReference>
<dbReference type="PIR" id="G71180">
    <property type="entry name" value="G71180"/>
</dbReference>
<dbReference type="RefSeq" id="WP_010885788.1">
    <property type="nucleotide sequence ID" value="NC_000961.1"/>
</dbReference>
<dbReference type="PDB" id="1V7L">
    <property type="method" value="X-ray"/>
    <property type="resolution" value="1.98 A"/>
    <property type="chains" value="A/B=1-163"/>
</dbReference>
<dbReference type="PDBsum" id="1V7L"/>
<dbReference type="SMR" id="O59393"/>
<dbReference type="STRING" id="70601.gene:9378720"/>
<dbReference type="EnsemblBacteria" id="BAA30838">
    <property type="protein sequence ID" value="BAA30838"/>
    <property type="gene ID" value="BAA30838"/>
</dbReference>
<dbReference type="GeneID" id="1442569"/>
<dbReference type="KEGG" id="pho:PH1724"/>
<dbReference type="eggNOG" id="arCOG02230">
    <property type="taxonomic scope" value="Archaea"/>
</dbReference>
<dbReference type="OrthoDB" id="6505at2157"/>
<dbReference type="BRENDA" id="4.2.1.33">
    <property type="organism ID" value="5244"/>
</dbReference>
<dbReference type="UniPathway" id="UPA00048">
    <property type="reaction ID" value="UER00071"/>
</dbReference>
<dbReference type="EvolutionaryTrace" id="O59393"/>
<dbReference type="Proteomes" id="UP000000752">
    <property type="component" value="Chromosome"/>
</dbReference>
<dbReference type="GO" id="GO:0003861">
    <property type="term" value="F:3-isopropylmalate dehydratase activity"/>
    <property type="evidence" value="ECO:0007669"/>
    <property type="project" value="UniProtKB-UniRule"/>
</dbReference>
<dbReference type="GO" id="GO:0009098">
    <property type="term" value="P:L-leucine biosynthetic process"/>
    <property type="evidence" value="ECO:0007669"/>
    <property type="project" value="UniProtKB-UniRule"/>
</dbReference>
<dbReference type="CDD" id="cd01577">
    <property type="entry name" value="IPMI_Swivel"/>
    <property type="match status" value="1"/>
</dbReference>
<dbReference type="Gene3D" id="3.20.19.10">
    <property type="entry name" value="Aconitase, domain 4"/>
    <property type="match status" value="1"/>
</dbReference>
<dbReference type="HAMAP" id="MF_01032">
    <property type="entry name" value="LeuD_type2"/>
    <property type="match status" value="1"/>
</dbReference>
<dbReference type="InterPro" id="IPR015928">
    <property type="entry name" value="Aconitase/3IPM_dehydase_swvl"/>
</dbReference>
<dbReference type="InterPro" id="IPR000573">
    <property type="entry name" value="AconitaseA/IPMdHydase_ssu_swvl"/>
</dbReference>
<dbReference type="InterPro" id="IPR033940">
    <property type="entry name" value="IPMI_Swivel"/>
</dbReference>
<dbReference type="InterPro" id="IPR050075">
    <property type="entry name" value="LeuD"/>
</dbReference>
<dbReference type="InterPro" id="IPR011827">
    <property type="entry name" value="LeuD_type2/HacB/DmdB"/>
</dbReference>
<dbReference type="NCBIfam" id="TIGR02087">
    <property type="entry name" value="LEUD_arch"/>
    <property type="match status" value="1"/>
</dbReference>
<dbReference type="PANTHER" id="PTHR43345:SF9">
    <property type="entry name" value="3-ISOPROPYLMALATE DEHYDRATASE SMALL SUBUNIT"/>
    <property type="match status" value="1"/>
</dbReference>
<dbReference type="PANTHER" id="PTHR43345">
    <property type="entry name" value="3-ISOPROPYLMALATE DEHYDRATASE SMALL SUBUNIT 2-RELATED-RELATED"/>
    <property type="match status" value="1"/>
</dbReference>
<dbReference type="Pfam" id="PF00694">
    <property type="entry name" value="Aconitase_C"/>
    <property type="match status" value="1"/>
</dbReference>
<dbReference type="SUPFAM" id="SSF52016">
    <property type="entry name" value="LeuD/IlvD-like"/>
    <property type="match status" value="1"/>
</dbReference>
<evidence type="ECO:0000250" key="1"/>
<evidence type="ECO:0000305" key="2"/>
<evidence type="ECO:0007829" key="3">
    <source>
        <dbReference type="PDB" id="1V7L"/>
    </source>
</evidence>
<comment type="function">
    <text evidence="1">Catalyzes the isomerization between 2-isopropylmalate and 3-isopropylmalate, via the formation of 2-isopropylmaleate.</text>
</comment>
<comment type="catalytic activity">
    <reaction>
        <text>(2R,3S)-3-isopropylmalate = (2S)-2-isopropylmalate</text>
        <dbReference type="Rhea" id="RHEA:32287"/>
        <dbReference type="ChEBI" id="CHEBI:1178"/>
        <dbReference type="ChEBI" id="CHEBI:35121"/>
        <dbReference type="EC" id="4.2.1.33"/>
    </reaction>
</comment>
<comment type="pathway">
    <text>Amino-acid biosynthesis; L-leucine biosynthesis; L-leucine from 3-methyl-2-oxobutanoate: step 2/4.</text>
</comment>
<comment type="subunit">
    <text evidence="1">Heterodimer of LeuC and LeuD.</text>
</comment>
<comment type="similarity">
    <text evidence="2">Belongs to the LeuD family. LeuD type 2 subfamily.</text>
</comment>
<protein>
    <recommendedName>
        <fullName>3-isopropylmalate dehydratase small subunit</fullName>
        <ecNumber>4.2.1.33</ecNumber>
    </recommendedName>
    <alternativeName>
        <fullName>Alpha-IPM isomerase</fullName>
        <shortName>IPMI</shortName>
    </alternativeName>
    <alternativeName>
        <fullName>Isopropylmalate isomerase</fullName>
    </alternativeName>
</protein>
<accession>O59393</accession>
<gene>
    <name type="primary">leuD</name>
    <name type="ordered locus">PH1724</name>
</gene>
<sequence length="163" mass="18011">MITTGKVWKFGDDISTDEITPGRYNLTKDPKELAKIAFIEVRPDFARNVRPGDVVVAGKNFGIGSSRESAALALKALGIAGVIAESFGRIFYRNAINIGIPLLLGKTEGLKDGDLVTVNWETGEVRKGDEILMFEPLEDFLLEIVREGGILEYIRRRGDLCIR</sequence>